<evidence type="ECO:0000250" key="1">
    <source>
        <dbReference type="UniProtKB" id="O04385"/>
    </source>
</evidence>
<evidence type="ECO:0000255" key="2">
    <source>
        <dbReference type="PROSITE-ProRule" id="PRU01020"/>
    </source>
</evidence>
<evidence type="ECO:0000269" key="3">
    <source>
    </source>
</evidence>
<evidence type="ECO:0000303" key="4">
    <source>
    </source>
</evidence>
<evidence type="ECO:0000305" key="5"/>
<sequence>MSDYPKTPQAAHLTALVELISSSVNEVISVYSAAGRDIPSLDSLEEGFLETPATTPPGLRHARQIIEAACAQLCVTIAQPGDCIVNKAFAYTESACLQVAANAKISDFLADKPDGLHTEELAKLSGVDAGKLGQVLRFLATKHVYREVRPNVYANNRLSVKLMSSDPVSCNVGVCTGELFQAATAAWDTLSDKEYGPSYLPTKTAFRKVHGATFFEYYETHVRLNLPRFSGAMVGWGNITDRGLLPQMYEWQRLEPGATICDVGGNNGHATLDLVKEYPMISVIVQDLESLRPRWSDLWARELPDAIQDGRTSFVPIDFFRDIPVRNCDVYYIRHILHDWPDASCVQILRNVKEAMQPSSRVLIHEYVLQQTTRDDVTVENDSAPEPLLPNYGNGRIRRYYQDITMLLGLNSKERTLQEFIDIGAQAGLKFVKLWDGGQTALVEFSC</sequence>
<name>OMT2_PHACR</name>
<comment type="function">
    <text evidence="3">S-adenosyl-L-methionine-dependent methyltransferase that preferentially catalyzes the methylation of 3-OH phenolic compounds like isovanillic acid and 3-OH-4-Met cinnamic acid. May play a role in promoting lignin degradation by methylating and inactivating free-hydroxyl phenolic compounds, products of lignin cleavage which are known inhibitors of lignin peroxidases.</text>
</comment>
<comment type="biophysicochemical properties">
    <phDependence>
        <text evidence="3">Optimum pH is 8.0.</text>
    </phDependence>
</comment>
<comment type="similarity">
    <text evidence="5">Belongs to the class I-like SAM-binding methyltransferase superfamily. Cation-independent O-methyltransferase family. COMT subfamily.</text>
</comment>
<feature type="chain" id="PRO_0000435967" description="3-O-methyltransferase 2">
    <location>
        <begin position="1"/>
        <end position="447"/>
    </location>
</feature>
<feature type="active site" description="Proton acceptor" evidence="2">
    <location>
        <position position="338"/>
    </location>
</feature>
<feature type="binding site" evidence="1">
    <location>
        <begin position="264"/>
        <end position="265"/>
    </location>
    <ligand>
        <name>S-adenosyl-L-methionine</name>
        <dbReference type="ChEBI" id="CHEBI:59789"/>
    </ligand>
</feature>
<feature type="binding site" evidence="1">
    <location>
        <position position="287"/>
    </location>
    <ligand>
        <name>S-adenosyl-L-methionine</name>
        <dbReference type="ChEBI" id="CHEBI:59789"/>
    </ligand>
</feature>
<feature type="binding site" evidence="1">
    <location>
        <begin position="318"/>
        <end position="319"/>
    </location>
    <ligand>
        <name>S-adenosyl-L-methionine</name>
        <dbReference type="ChEBI" id="CHEBI:59789"/>
    </ligand>
</feature>
<feature type="binding site" evidence="1">
    <location>
        <position position="334"/>
    </location>
    <ligand>
        <name>S-adenosyl-L-methionine</name>
        <dbReference type="ChEBI" id="CHEBI:59789"/>
    </ligand>
</feature>
<keyword id="KW-0439">Lignin degradation</keyword>
<keyword id="KW-0489">Methyltransferase</keyword>
<keyword id="KW-0949">S-adenosyl-L-methionine</keyword>
<keyword id="KW-0808">Transferase</keyword>
<reference key="1">
    <citation type="journal article" date="2004" name="Nat. Biotechnol.">
        <title>Genome sequence of the lignocellulose degrading fungus Phanerochaete chrysosporium strain RP78.</title>
        <authorList>
            <person name="Martinez D."/>
            <person name="Larrondo L.F."/>
            <person name="Putnam N."/>
            <person name="Gelpke M.D.S."/>
            <person name="Huang K."/>
            <person name="Chapman J."/>
            <person name="Helfenbein K.G."/>
            <person name="Ramaiya P."/>
            <person name="Detter J.C."/>
            <person name="Larimer F."/>
            <person name="Coutinho P.M."/>
            <person name="Henrissat B."/>
            <person name="Berka R."/>
            <person name="Cullen D."/>
            <person name="Rokhsar D."/>
        </authorList>
    </citation>
    <scope>NUCLEOTIDE SEQUENCE [LARGE SCALE GENOMIC DNA]</scope>
    <source>
        <strain>RP-78 / ATCC MYA-4764 / FGSC 9002</strain>
    </source>
</reference>
<reference key="2">
    <citation type="journal article" date="2006" name="Fungal Genet. Biol.">
        <title>Computational analysis of the Phanerochaete chrysosporium v2.0 genome database and mass spectrometry identification of peptides in ligninolytic cultures reveal complex mixtures of secreted proteins.</title>
        <authorList>
            <person name="Vanden Wymelenberg A."/>
            <person name="Minges P."/>
            <person name="Sabat G."/>
            <person name="Martinez D."/>
            <person name="Aerts A."/>
            <person name="Salamov A."/>
            <person name="Grigoriev I."/>
            <person name="Shapiro H."/>
            <person name="Putnam N."/>
            <person name="Belinky P."/>
            <person name="Dosoretz C."/>
            <person name="Gaskell J."/>
            <person name="Kersten P."/>
            <person name="Cullen D."/>
        </authorList>
    </citation>
    <scope>GENOME REANNOTATION</scope>
    <source>
        <strain>RP-78 / ATCC MYA-4764 / FGSC 9002</strain>
    </source>
</reference>
<reference key="3">
    <citation type="journal article" date="2014" name="Fungal Genet. Biol.">
        <title>Genomics of wood-degrading fungi.</title>
        <authorList>
            <person name="Ohm R.A."/>
            <person name="Riley R."/>
            <person name="Salamov A."/>
            <person name="Min B."/>
            <person name="Choi I.-G."/>
            <person name="Grigoriev I.V."/>
        </authorList>
    </citation>
    <scope>GENOME REANNOTATION</scope>
    <source>
        <strain>RP-78 / ATCC MYA-4764 / FGSC 9002</strain>
    </source>
</reference>
<reference key="4">
    <citation type="journal article" date="2016" name="Enzyme Microb. Technol.">
        <title>Discovery and characterization of new O-methyltransferase from the genome of the lignin-degrading fungus Phanerochaete chrysosporium for enhanced lignin degradation.</title>
        <authorList>
            <person name="Pham L.T.M."/>
            <person name="Kim Y.H."/>
        </authorList>
    </citation>
    <scope>FUNCTION</scope>
    <scope>CATALYTIC ACTIVITY</scope>
    <scope>BIOPHYSICOCHEMICAL PROPERTIES</scope>
</reference>
<proteinExistence type="evidence at protein level"/>
<accession>P0CT90</accession>
<dbReference type="EC" id="2.1.1.-" evidence="3"/>
<dbReference type="EMBL" id="AADS01000354">
    <property type="status" value="NOT_ANNOTATED_CDS"/>
    <property type="molecule type" value="Genomic_DNA"/>
</dbReference>
<dbReference type="SMR" id="P0CT90"/>
<dbReference type="EnsemblFungi" id="AGR57_4912T0">
    <property type="protein sequence ID" value="AGR57_4912T0-p1"/>
    <property type="gene ID" value="AGR57_4912"/>
</dbReference>
<dbReference type="VEuPathDB" id="FungiDB:AGR57_4912"/>
<dbReference type="GO" id="GO:0008171">
    <property type="term" value="F:O-methyltransferase activity"/>
    <property type="evidence" value="ECO:0007669"/>
    <property type="project" value="InterPro"/>
</dbReference>
<dbReference type="GO" id="GO:0046983">
    <property type="term" value="F:protein dimerization activity"/>
    <property type="evidence" value="ECO:0007669"/>
    <property type="project" value="InterPro"/>
</dbReference>
<dbReference type="GO" id="GO:0046274">
    <property type="term" value="P:lignin catabolic process"/>
    <property type="evidence" value="ECO:0007669"/>
    <property type="project" value="UniProtKB-KW"/>
</dbReference>
<dbReference type="GO" id="GO:0032259">
    <property type="term" value="P:methylation"/>
    <property type="evidence" value="ECO:0007669"/>
    <property type="project" value="UniProtKB-KW"/>
</dbReference>
<dbReference type="GO" id="GO:0044550">
    <property type="term" value="P:secondary metabolite biosynthetic process"/>
    <property type="evidence" value="ECO:0007669"/>
    <property type="project" value="UniProtKB-ARBA"/>
</dbReference>
<dbReference type="Gene3D" id="3.40.50.150">
    <property type="entry name" value="Vaccinia Virus protein VP39"/>
    <property type="match status" value="1"/>
</dbReference>
<dbReference type="Gene3D" id="1.10.10.10">
    <property type="entry name" value="Winged helix-like DNA-binding domain superfamily/Winged helix DNA-binding domain"/>
    <property type="match status" value="1"/>
</dbReference>
<dbReference type="InterPro" id="IPR016461">
    <property type="entry name" value="COMT-like"/>
</dbReference>
<dbReference type="InterPro" id="IPR001077">
    <property type="entry name" value="O_MeTrfase_dom"/>
</dbReference>
<dbReference type="InterPro" id="IPR012967">
    <property type="entry name" value="Plant_O-MeTrfase_dimerisation"/>
</dbReference>
<dbReference type="InterPro" id="IPR029063">
    <property type="entry name" value="SAM-dependent_MTases_sf"/>
</dbReference>
<dbReference type="InterPro" id="IPR036388">
    <property type="entry name" value="WH-like_DNA-bd_sf"/>
</dbReference>
<dbReference type="InterPro" id="IPR036390">
    <property type="entry name" value="WH_DNA-bd_sf"/>
</dbReference>
<dbReference type="PANTHER" id="PTHR43712:SF2">
    <property type="entry name" value="O-METHYLTRANSFERASE CICE"/>
    <property type="match status" value="1"/>
</dbReference>
<dbReference type="PANTHER" id="PTHR43712">
    <property type="entry name" value="PUTATIVE (AFU_ORTHOLOGUE AFUA_4G14580)-RELATED"/>
    <property type="match status" value="1"/>
</dbReference>
<dbReference type="Pfam" id="PF08100">
    <property type="entry name" value="Dimerisation"/>
    <property type="match status" value="1"/>
</dbReference>
<dbReference type="Pfam" id="PF00891">
    <property type="entry name" value="Methyltransf_2"/>
    <property type="match status" value="1"/>
</dbReference>
<dbReference type="SUPFAM" id="SSF53335">
    <property type="entry name" value="S-adenosyl-L-methionine-dependent methyltransferases"/>
    <property type="match status" value="1"/>
</dbReference>
<dbReference type="SUPFAM" id="SSF46785">
    <property type="entry name" value="Winged helix' DNA-binding domain"/>
    <property type="match status" value="1"/>
</dbReference>
<dbReference type="PROSITE" id="PS51683">
    <property type="entry name" value="SAM_OMT_II"/>
    <property type="match status" value="1"/>
</dbReference>
<organism>
    <name type="scientific">Phanerochaete chrysosporium (strain RP-78 / ATCC MYA-4764 / FGSC 9002)</name>
    <name type="common">White-rot fungus</name>
    <name type="synonym">Sporotrichum pruinosum</name>
    <dbReference type="NCBI Taxonomy" id="273507"/>
    <lineage>
        <taxon>Eukaryota</taxon>
        <taxon>Fungi</taxon>
        <taxon>Dikarya</taxon>
        <taxon>Basidiomycota</taxon>
        <taxon>Agaricomycotina</taxon>
        <taxon>Agaricomycetes</taxon>
        <taxon>Polyporales</taxon>
        <taxon>Phanerochaetaceae</taxon>
        <taxon>Phanerodontia</taxon>
        <taxon>Phanerodontia chrysosporium</taxon>
    </lineage>
</organism>
<gene>
    <name type="ORF">e_gw1.4.1014.1</name>
</gene>
<protein>
    <recommendedName>
        <fullName evidence="4">3-O-methyltransferase 2</fullName>
        <shortName evidence="4">Mtrase 2</shortName>
        <ecNumber evidence="3">2.1.1.-</ecNumber>
    </recommendedName>
</protein>